<dbReference type="SMR" id="P81599"/>
<dbReference type="ArachnoServer" id="AS000201">
    <property type="toxin name" value="omega-hexatoxin-Hv1f"/>
</dbReference>
<dbReference type="GO" id="GO:0005576">
    <property type="term" value="C:extracellular region"/>
    <property type="evidence" value="ECO:0007669"/>
    <property type="project" value="UniProtKB-SubCell"/>
</dbReference>
<dbReference type="GO" id="GO:0019855">
    <property type="term" value="F:calcium channel inhibitor activity"/>
    <property type="evidence" value="ECO:0007669"/>
    <property type="project" value="InterPro"/>
</dbReference>
<dbReference type="GO" id="GO:0090729">
    <property type="term" value="F:toxin activity"/>
    <property type="evidence" value="ECO:0007669"/>
    <property type="project" value="UniProtKB-KW"/>
</dbReference>
<dbReference type="GO" id="GO:0006952">
    <property type="term" value="P:defense response"/>
    <property type="evidence" value="ECO:0007669"/>
    <property type="project" value="InterPro"/>
</dbReference>
<dbReference type="InterPro" id="IPR009415">
    <property type="entry name" value="Omega-atracotox"/>
</dbReference>
<dbReference type="InterPro" id="IPR018071">
    <property type="entry name" value="Omega-atracotox_CS"/>
</dbReference>
<dbReference type="Pfam" id="PF06357">
    <property type="entry name" value="Omega-toxin"/>
    <property type="match status" value="1"/>
</dbReference>
<dbReference type="SUPFAM" id="SSF57059">
    <property type="entry name" value="omega toxin-like"/>
    <property type="match status" value="1"/>
</dbReference>
<dbReference type="PROSITE" id="PS60016">
    <property type="entry name" value="OMEGA_ACTX_1"/>
    <property type="match status" value="1"/>
</dbReference>
<keyword id="KW-0108">Calcium channel impairing toxin</keyword>
<keyword id="KW-0903">Direct protein sequencing</keyword>
<keyword id="KW-1015">Disulfide bond</keyword>
<keyword id="KW-0872">Ion channel impairing toxin</keyword>
<keyword id="KW-0960">Knottin</keyword>
<keyword id="KW-0528">Neurotoxin</keyword>
<keyword id="KW-0964">Secreted</keyword>
<keyword id="KW-0800">Toxin</keyword>
<keyword id="KW-1218">Voltage-gated calcium channel impairing toxin</keyword>
<protein>
    <recommendedName>
        <fullName evidence="4">Omega-hexatoxin-Hv1f</fullName>
        <shortName evidence="4">Omega-HXTX-Hv1f</shortName>
    </recommendedName>
    <alternativeName>
        <fullName evidence="3">Omega-atracotoxin-Hv1f</fullName>
        <shortName evidence="3">Omega-AcTx-Hv1f</shortName>
    </alternativeName>
</protein>
<reference key="1">
    <citation type="journal article" date="1999" name="Eur. J. Biochem.">
        <title>Structure-function studies of omega-atracotoxin, a potent antagonist of insect voltage-gated calcium channels.</title>
        <authorList>
            <person name="Wang X.-H."/>
            <person name="Smith R."/>
            <person name="Fletcher J.I."/>
            <person name="Wilson H."/>
            <person name="Wood C.J."/>
            <person name="Merlin E.H."/>
            <person name="King G.F."/>
        </authorList>
    </citation>
    <scope>PROTEIN SEQUENCE</scope>
    <scope>TOXIC DOSE</scope>
    <scope>SUBCELLULAR LOCATION</scope>
    <source>
        <tissue>Venom</tissue>
    </source>
</reference>
<comment type="function">
    <text evidence="1">Inhibits insect, but not mammalian, voltage-gated calcium channels (Cav).</text>
</comment>
<comment type="subcellular location">
    <subcellularLocation>
        <location evidence="2">Secreted</location>
    </subcellularLocation>
</comment>
<comment type="tissue specificity">
    <text evidence="5">Expressed by the venom gland.</text>
</comment>
<comment type="domain">
    <text evidence="1">The presence of a 'disulfide through disulfide knot' structurally defines this protein as a knottin.</text>
</comment>
<comment type="toxic dose">
    <text evidence="2">LD(50) is 1384 pmol/g when injected into house crickets (Acheta domestica).</text>
</comment>
<comment type="similarity">
    <text evidence="4">Belongs to the neurotoxin 08 (Shiva) family. 01 (omega toxin) subfamily.</text>
</comment>
<sequence>SAVCIPSGQPCPYSKYCCSGSCTYKTNENGNSVQRCD</sequence>
<feature type="peptide" id="PRO_0000044993" description="Omega-hexatoxin-Hv1f" evidence="2">
    <location>
        <begin position="1"/>
        <end position="37"/>
    </location>
</feature>
<feature type="site" description="Critical for insecticidal activity" evidence="1">
    <location>
        <position position="10"/>
    </location>
</feature>
<feature type="site" description="Critical for insecticidal activity" evidence="1">
    <location>
        <position position="27"/>
    </location>
</feature>
<feature type="site" description="Critical for insecticidal activity" evidence="1">
    <location>
        <position position="35"/>
    </location>
</feature>
<feature type="disulfide bond" evidence="1">
    <location>
        <begin position="4"/>
        <end position="18"/>
    </location>
</feature>
<feature type="disulfide bond" evidence="1">
    <location>
        <begin position="11"/>
        <end position="22"/>
    </location>
</feature>
<feature type="disulfide bond" evidence="1">
    <location>
        <begin position="17"/>
        <end position="36"/>
    </location>
</feature>
<proteinExistence type="evidence at protein level"/>
<accession>P81599</accession>
<organism>
    <name type="scientific">Hadronyche versuta</name>
    <name type="common">Blue mountains funnel-web spider</name>
    <name type="synonym">Atrax versutus</name>
    <dbReference type="NCBI Taxonomy" id="6904"/>
    <lineage>
        <taxon>Eukaryota</taxon>
        <taxon>Metazoa</taxon>
        <taxon>Ecdysozoa</taxon>
        <taxon>Arthropoda</taxon>
        <taxon>Chelicerata</taxon>
        <taxon>Arachnida</taxon>
        <taxon>Araneae</taxon>
        <taxon>Mygalomorphae</taxon>
        <taxon>Hexathelidae</taxon>
        <taxon>Hadronyche</taxon>
    </lineage>
</organism>
<name>TO1F_HADVE</name>
<evidence type="ECO:0000250" key="1">
    <source>
        <dbReference type="UniProtKB" id="P56207"/>
    </source>
</evidence>
<evidence type="ECO:0000269" key="2">
    <source>
    </source>
</evidence>
<evidence type="ECO:0000303" key="3">
    <source>
    </source>
</evidence>
<evidence type="ECO:0000305" key="4"/>
<evidence type="ECO:0000305" key="5">
    <source>
    </source>
</evidence>